<sequence>MTTIVSVRRNNQVVIAGDGQVSLGNTVMKGNAKKVRRLYHNKVLAGFAGGTADAFTLFERFEAKLEMHQGHLLRSAVELAKDWRTDRMLRKLEALLVVADAETSLIITGNGDVVQPEHDLVAIGSGGNYAQAAALALLQNTELSALEIAEKSLTIAADICVFTNQFKTIEELNY</sequence>
<proteinExistence type="inferred from homology"/>
<accession>A3D9C5</accession>
<protein>
    <recommendedName>
        <fullName evidence="1">ATP-dependent protease subunit HslV</fullName>
        <ecNumber evidence="1">3.4.25.2</ecNumber>
    </recommendedName>
</protein>
<name>HSLV_SHEB5</name>
<comment type="function">
    <text evidence="1">Protease subunit of a proteasome-like degradation complex believed to be a general protein degrading machinery.</text>
</comment>
<comment type="catalytic activity">
    <reaction evidence="1">
        <text>ATP-dependent cleavage of peptide bonds with broad specificity.</text>
        <dbReference type="EC" id="3.4.25.2"/>
    </reaction>
</comment>
<comment type="activity regulation">
    <text evidence="1">Allosterically activated by HslU binding.</text>
</comment>
<comment type="subunit">
    <text evidence="1">A double ring-shaped homohexamer of HslV is capped on each side by a ring-shaped HslU homohexamer. The assembly of the HslU/HslV complex is dependent on binding of ATP.</text>
</comment>
<comment type="subcellular location">
    <subcellularLocation>
        <location evidence="1">Cytoplasm</location>
    </subcellularLocation>
</comment>
<comment type="similarity">
    <text evidence="1">Belongs to the peptidase T1B family. HslV subfamily.</text>
</comment>
<organism>
    <name type="scientific">Shewanella baltica (strain OS155 / ATCC BAA-1091)</name>
    <dbReference type="NCBI Taxonomy" id="325240"/>
    <lineage>
        <taxon>Bacteria</taxon>
        <taxon>Pseudomonadati</taxon>
        <taxon>Pseudomonadota</taxon>
        <taxon>Gammaproteobacteria</taxon>
        <taxon>Alteromonadales</taxon>
        <taxon>Shewanellaceae</taxon>
        <taxon>Shewanella</taxon>
    </lineage>
</organism>
<evidence type="ECO:0000255" key="1">
    <source>
        <dbReference type="HAMAP-Rule" id="MF_00248"/>
    </source>
</evidence>
<dbReference type="EC" id="3.4.25.2" evidence="1"/>
<dbReference type="EMBL" id="CP000563">
    <property type="protein sequence ID" value="ABN63338.1"/>
    <property type="molecule type" value="Genomic_DNA"/>
</dbReference>
<dbReference type="RefSeq" id="WP_006083300.1">
    <property type="nucleotide sequence ID" value="NC_009052.1"/>
</dbReference>
<dbReference type="SMR" id="A3D9C5"/>
<dbReference type="STRING" id="325240.Sbal_3867"/>
<dbReference type="MEROPS" id="T01.006"/>
<dbReference type="GeneID" id="11770798"/>
<dbReference type="KEGG" id="sbl:Sbal_3867"/>
<dbReference type="HOGENOM" id="CLU_093872_1_0_6"/>
<dbReference type="OrthoDB" id="9804884at2"/>
<dbReference type="Proteomes" id="UP000001557">
    <property type="component" value="Chromosome"/>
</dbReference>
<dbReference type="GO" id="GO:0009376">
    <property type="term" value="C:HslUV protease complex"/>
    <property type="evidence" value="ECO:0007669"/>
    <property type="project" value="UniProtKB-UniRule"/>
</dbReference>
<dbReference type="GO" id="GO:0005839">
    <property type="term" value="C:proteasome core complex"/>
    <property type="evidence" value="ECO:0007669"/>
    <property type="project" value="InterPro"/>
</dbReference>
<dbReference type="GO" id="GO:0046872">
    <property type="term" value="F:metal ion binding"/>
    <property type="evidence" value="ECO:0007669"/>
    <property type="project" value="UniProtKB-KW"/>
</dbReference>
<dbReference type="GO" id="GO:0004298">
    <property type="term" value="F:threonine-type endopeptidase activity"/>
    <property type="evidence" value="ECO:0007669"/>
    <property type="project" value="UniProtKB-KW"/>
</dbReference>
<dbReference type="GO" id="GO:0051603">
    <property type="term" value="P:proteolysis involved in protein catabolic process"/>
    <property type="evidence" value="ECO:0007669"/>
    <property type="project" value="InterPro"/>
</dbReference>
<dbReference type="CDD" id="cd01913">
    <property type="entry name" value="protease_HslV"/>
    <property type="match status" value="1"/>
</dbReference>
<dbReference type="FunFam" id="3.60.20.10:FF:000002">
    <property type="entry name" value="ATP-dependent protease subunit HslV"/>
    <property type="match status" value="1"/>
</dbReference>
<dbReference type="Gene3D" id="3.60.20.10">
    <property type="entry name" value="Glutamine Phosphoribosylpyrophosphate, subunit 1, domain 1"/>
    <property type="match status" value="1"/>
</dbReference>
<dbReference type="HAMAP" id="MF_00248">
    <property type="entry name" value="HslV"/>
    <property type="match status" value="1"/>
</dbReference>
<dbReference type="InterPro" id="IPR022281">
    <property type="entry name" value="ATP-dep_Prtase_HsIV_su"/>
</dbReference>
<dbReference type="InterPro" id="IPR029055">
    <property type="entry name" value="Ntn_hydrolases_N"/>
</dbReference>
<dbReference type="InterPro" id="IPR001353">
    <property type="entry name" value="Proteasome_sua/b"/>
</dbReference>
<dbReference type="InterPro" id="IPR023333">
    <property type="entry name" value="Proteasome_suB-type"/>
</dbReference>
<dbReference type="NCBIfam" id="TIGR03692">
    <property type="entry name" value="ATP_dep_HslV"/>
    <property type="match status" value="1"/>
</dbReference>
<dbReference type="NCBIfam" id="NF003964">
    <property type="entry name" value="PRK05456.1"/>
    <property type="match status" value="1"/>
</dbReference>
<dbReference type="PANTHER" id="PTHR32194:SF0">
    <property type="entry name" value="ATP-DEPENDENT PROTEASE SUBUNIT HSLV"/>
    <property type="match status" value="1"/>
</dbReference>
<dbReference type="PANTHER" id="PTHR32194">
    <property type="entry name" value="METALLOPROTEASE TLDD"/>
    <property type="match status" value="1"/>
</dbReference>
<dbReference type="Pfam" id="PF00227">
    <property type="entry name" value="Proteasome"/>
    <property type="match status" value="1"/>
</dbReference>
<dbReference type="PIRSF" id="PIRSF039093">
    <property type="entry name" value="HslV"/>
    <property type="match status" value="1"/>
</dbReference>
<dbReference type="SUPFAM" id="SSF56235">
    <property type="entry name" value="N-terminal nucleophile aminohydrolases (Ntn hydrolases)"/>
    <property type="match status" value="1"/>
</dbReference>
<dbReference type="PROSITE" id="PS51476">
    <property type="entry name" value="PROTEASOME_BETA_2"/>
    <property type="match status" value="1"/>
</dbReference>
<keyword id="KW-0021">Allosteric enzyme</keyword>
<keyword id="KW-0963">Cytoplasm</keyword>
<keyword id="KW-0378">Hydrolase</keyword>
<keyword id="KW-0479">Metal-binding</keyword>
<keyword id="KW-0645">Protease</keyword>
<keyword id="KW-1185">Reference proteome</keyword>
<keyword id="KW-0915">Sodium</keyword>
<keyword id="KW-0888">Threonine protease</keyword>
<reference key="1">
    <citation type="submission" date="2007-02" db="EMBL/GenBank/DDBJ databases">
        <title>Complete sequence of chromosome of Shewanella baltica OS155.</title>
        <authorList>
            <consortium name="US DOE Joint Genome Institute"/>
            <person name="Copeland A."/>
            <person name="Lucas S."/>
            <person name="Lapidus A."/>
            <person name="Barry K."/>
            <person name="Detter J.C."/>
            <person name="Glavina del Rio T."/>
            <person name="Hammon N."/>
            <person name="Israni S."/>
            <person name="Dalin E."/>
            <person name="Tice H."/>
            <person name="Pitluck S."/>
            <person name="Sims D.R."/>
            <person name="Brettin T."/>
            <person name="Bruce D."/>
            <person name="Han C."/>
            <person name="Tapia R."/>
            <person name="Brainard J."/>
            <person name="Schmutz J."/>
            <person name="Larimer F."/>
            <person name="Land M."/>
            <person name="Hauser L."/>
            <person name="Kyrpides N."/>
            <person name="Mikhailova N."/>
            <person name="Brettar I."/>
            <person name="Klappenbach J."/>
            <person name="Konstantinidis K."/>
            <person name="Rodrigues J."/>
            <person name="Tiedje J."/>
            <person name="Richardson P."/>
        </authorList>
    </citation>
    <scope>NUCLEOTIDE SEQUENCE [LARGE SCALE GENOMIC DNA]</scope>
    <source>
        <strain>OS155 / ATCC BAA-1091</strain>
    </source>
</reference>
<gene>
    <name evidence="1" type="primary">hslV</name>
    <name type="ordered locus">Sbal_3867</name>
</gene>
<feature type="chain" id="PRO_1000012665" description="ATP-dependent protease subunit HslV">
    <location>
        <begin position="1"/>
        <end position="174"/>
    </location>
</feature>
<feature type="active site" evidence="1">
    <location>
        <position position="2"/>
    </location>
</feature>
<feature type="binding site" evidence="1">
    <location>
        <position position="157"/>
    </location>
    <ligand>
        <name>Na(+)</name>
        <dbReference type="ChEBI" id="CHEBI:29101"/>
    </ligand>
</feature>
<feature type="binding site" evidence="1">
    <location>
        <position position="160"/>
    </location>
    <ligand>
        <name>Na(+)</name>
        <dbReference type="ChEBI" id="CHEBI:29101"/>
    </ligand>
</feature>
<feature type="binding site" evidence="1">
    <location>
        <position position="163"/>
    </location>
    <ligand>
        <name>Na(+)</name>
        <dbReference type="ChEBI" id="CHEBI:29101"/>
    </ligand>
</feature>